<organism>
    <name type="scientific">Yersinia pseudotuberculosis serotype IB (strain PB1/+)</name>
    <dbReference type="NCBI Taxonomy" id="502801"/>
    <lineage>
        <taxon>Bacteria</taxon>
        <taxon>Pseudomonadati</taxon>
        <taxon>Pseudomonadota</taxon>
        <taxon>Gammaproteobacteria</taxon>
        <taxon>Enterobacterales</taxon>
        <taxon>Yersiniaceae</taxon>
        <taxon>Yersinia</taxon>
    </lineage>
</organism>
<sequence>MTTANQPICPSPAKWPSPAKLNLFLYITGQRADGYHQLQTLFQFLDYGDQLTIEPRDDNQIRLLTPIAGVENEQNLIVRAAKMLQKHPGNTPVPRGADISIDKCLPMGGGLGGGSSNAATVLVALNLLWQCGLTDEQLADLGLTLGADVPVFVRGHAAFAEGIGEKLQPAEPVEKWYLVIHPGVNIPTPIIFSDPELKRNTPIRPLAALLSTPYANDCEPIARKRFREVEQALSWLLEYAPSRLTGTGACVFAEFDTESSARQVLSIAPEWLHGFVARGVNVSPLHRVRSGKIESSERR</sequence>
<gene>
    <name evidence="1" type="primary">ispE</name>
    <name type="ordered locus">YPTS_2060</name>
</gene>
<name>ISPE_YERPB</name>
<evidence type="ECO:0000255" key="1">
    <source>
        <dbReference type="HAMAP-Rule" id="MF_00061"/>
    </source>
</evidence>
<dbReference type="EC" id="2.7.1.148" evidence="1"/>
<dbReference type="EMBL" id="CP001048">
    <property type="protein sequence ID" value="ACC89026.1"/>
    <property type="molecule type" value="Genomic_DNA"/>
</dbReference>
<dbReference type="RefSeq" id="WP_002211239.1">
    <property type="nucleotide sequence ID" value="NZ_CP009780.1"/>
</dbReference>
<dbReference type="SMR" id="B2K2Y7"/>
<dbReference type="GeneID" id="57976647"/>
<dbReference type="KEGG" id="ypb:YPTS_2060"/>
<dbReference type="UniPathway" id="UPA00056">
    <property type="reaction ID" value="UER00094"/>
</dbReference>
<dbReference type="GO" id="GO:0050515">
    <property type="term" value="F:4-(cytidine 5'-diphospho)-2-C-methyl-D-erythritol kinase activity"/>
    <property type="evidence" value="ECO:0007669"/>
    <property type="project" value="UniProtKB-UniRule"/>
</dbReference>
<dbReference type="GO" id="GO:0005524">
    <property type="term" value="F:ATP binding"/>
    <property type="evidence" value="ECO:0007669"/>
    <property type="project" value="UniProtKB-UniRule"/>
</dbReference>
<dbReference type="GO" id="GO:0019288">
    <property type="term" value="P:isopentenyl diphosphate biosynthetic process, methylerythritol 4-phosphate pathway"/>
    <property type="evidence" value="ECO:0007669"/>
    <property type="project" value="UniProtKB-UniRule"/>
</dbReference>
<dbReference type="GO" id="GO:0016114">
    <property type="term" value="P:terpenoid biosynthetic process"/>
    <property type="evidence" value="ECO:0007669"/>
    <property type="project" value="InterPro"/>
</dbReference>
<dbReference type="FunFam" id="3.30.230.10:FF:000022">
    <property type="entry name" value="4-diphosphocytidyl-2-C-methyl-D-erythritol kinase"/>
    <property type="match status" value="1"/>
</dbReference>
<dbReference type="FunFam" id="3.30.70.890:FF:000004">
    <property type="entry name" value="4-diphosphocytidyl-2-C-methyl-D-erythritol kinase"/>
    <property type="match status" value="1"/>
</dbReference>
<dbReference type="Gene3D" id="3.30.230.10">
    <property type="match status" value="1"/>
</dbReference>
<dbReference type="Gene3D" id="3.30.70.890">
    <property type="entry name" value="GHMP kinase, C-terminal domain"/>
    <property type="match status" value="1"/>
</dbReference>
<dbReference type="HAMAP" id="MF_00061">
    <property type="entry name" value="IspE"/>
    <property type="match status" value="1"/>
</dbReference>
<dbReference type="InterPro" id="IPR013750">
    <property type="entry name" value="GHMP_kinase_C_dom"/>
</dbReference>
<dbReference type="InterPro" id="IPR036554">
    <property type="entry name" value="GHMP_kinase_C_sf"/>
</dbReference>
<dbReference type="InterPro" id="IPR006204">
    <property type="entry name" value="GHMP_kinase_N_dom"/>
</dbReference>
<dbReference type="InterPro" id="IPR004424">
    <property type="entry name" value="IspE"/>
</dbReference>
<dbReference type="InterPro" id="IPR020568">
    <property type="entry name" value="Ribosomal_Su5_D2-typ_SF"/>
</dbReference>
<dbReference type="InterPro" id="IPR014721">
    <property type="entry name" value="Ribsml_uS5_D2-typ_fold_subgr"/>
</dbReference>
<dbReference type="NCBIfam" id="TIGR00154">
    <property type="entry name" value="ispE"/>
    <property type="match status" value="1"/>
</dbReference>
<dbReference type="PANTHER" id="PTHR43527">
    <property type="entry name" value="4-DIPHOSPHOCYTIDYL-2-C-METHYL-D-ERYTHRITOL KINASE, CHLOROPLASTIC"/>
    <property type="match status" value="1"/>
</dbReference>
<dbReference type="PANTHER" id="PTHR43527:SF2">
    <property type="entry name" value="4-DIPHOSPHOCYTIDYL-2-C-METHYL-D-ERYTHRITOL KINASE, CHLOROPLASTIC"/>
    <property type="match status" value="1"/>
</dbReference>
<dbReference type="Pfam" id="PF08544">
    <property type="entry name" value="GHMP_kinases_C"/>
    <property type="match status" value="1"/>
</dbReference>
<dbReference type="Pfam" id="PF00288">
    <property type="entry name" value="GHMP_kinases_N"/>
    <property type="match status" value="1"/>
</dbReference>
<dbReference type="PIRSF" id="PIRSF010376">
    <property type="entry name" value="IspE"/>
    <property type="match status" value="1"/>
</dbReference>
<dbReference type="SUPFAM" id="SSF55060">
    <property type="entry name" value="GHMP Kinase, C-terminal domain"/>
    <property type="match status" value="1"/>
</dbReference>
<dbReference type="SUPFAM" id="SSF54211">
    <property type="entry name" value="Ribosomal protein S5 domain 2-like"/>
    <property type="match status" value="1"/>
</dbReference>
<protein>
    <recommendedName>
        <fullName evidence="1">4-diphosphocytidyl-2-C-methyl-D-erythritol kinase</fullName>
        <shortName evidence="1">CMK</shortName>
        <ecNumber evidence="1">2.7.1.148</ecNumber>
    </recommendedName>
    <alternativeName>
        <fullName evidence="1">4-(cytidine-5'-diphospho)-2-C-methyl-D-erythritol kinase</fullName>
    </alternativeName>
</protein>
<comment type="function">
    <text evidence="1">Catalyzes the phosphorylation of the position 2 hydroxy group of 4-diphosphocytidyl-2C-methyl-D-erythritol.</text>
</comment>
<comment type="catalytic activity">
    <reaction evidence="1">
        <text>4-CDP-2-C-methyl-D-erythritol + ATP = 4-CDP-2-C-methyl-D-erythritol 2-phosphate + ADP + H(+)</text>
        <dbReference type="Rhea" id="RHEA:18437"/>
        <dbReference type="ChEBI" id="CHEBI:15378"/>
        <dbReference type="ChEBI" id="CHEBI:30616"/>
        <dbReference type="ChEBI" id="CHEBI:57823"/>
        <dbReference type="ChEBI" id="CHEBI:57919"/>
        <dbReference type="ChEBI" id="CHEBI:456216"/>
        <dbReference type="EC" id="2.7.1.148"/>
    </reaction>
</comment>
<comment type="pathway">
    <text evidence="1">Isoprenoid biosynthesis; isopentenyl diphosphate biosynthesis via DXP pathway; isopentenyl diphosphate from 1-deoxy-D-xylulose 5-phosphate: step 3/6.</text>
</comment>
<comment type="subunit">
    <text evidence="1">Homodimer.</text>
</comment>
<comment type="similarity">
    <text evidence="1">Belongs to the GHMP kinase family. IspE subfamily.</text>
</comment>
<proteinExistence type="inferred from homology"/>
<keyword id="KW-0067">ATP-binding</keyword>
<keyword id="KW-0414">Isoprene biosynthesis</keyword>
<keyword id="KW-0418">Kinase</keyword>
<keyword id="KW-0547">Nucleotide-binding</keyword>
<keyword id="KW-0808">Transferase</keyword>
<feature type="chain" id="PRO_1000092127" description="4-diphosphocytidyl-2-C-methyl-D-erythritol kinase">
    <location>
        <begin position="1"/>
        <end position="299"/>
    </location>
</feature>
<feature type="active site" evidence="1">
    <location>
        <position position="20"/>
    </location>
</feature>
<feature type="active site" evidence="1">
    <location>
        <position position="148"/>
    </location>
</feature>
<feature type="binding site" evidence="1">
    <location>
        <begin position="106"/>
        <end position="116"/>
    </location>
    <ligand>
        <name>ATP</name>
        <dbReference type="ChEBI" id="CHEBI:30616"/>
    </ligand>
</feature>
<reference key="1">
    <citation type="submission" date="2008-04" db="EMBL/GenBank/DDBJ databases">
        <title>Complete sequence of Yersinia pseudotuberculosis PB1/+.</title>
        <authorList>
            <person name="Copeland A."/>
            <person name="Lucas S."/>
            <person name="Lapidus A."/>
            <person name="Glavina del Rio T."/>
            <person name="Dalin E."/>
            <person name="Tice H."/>
            <person name="Bruce D."/>
            <person name="Goodwin L."/>
            <person name="Pitluck S."/>
            <person name="Munk A.C."/>
            <person name="Brettin T."/>
            <person name="Detter J.C."/>
            <person name="Han C."/>
            <person name="Tapia R."/>
            <person name="Schmutz J."/>
            <person name="Larimer F."/>
            <person name="Land M."/>
            <person name="Hauser L."/>
            <person name="Challacombe J.F."/>
            <person name="Green L."/>
            <person name="Lindler L.E."/>
            <person name="Nikolich M.P."/>
            <person name="Richardson P."/>
        </authorList>
    </citation>
    <scope>NUCLEOTIDE SEQUENCE [LARGE SCALE GENOMIC DNA]</scope>
    <source>
        <strain>PB1/+</strain>
    </source>
</reference>
<accession>B2K2Y7</accession>